<feature type="chain" id="PRO_0000080350" description="G2/mitotic-specific cyclin-B1">
    <location>
        <begin position="1"/>
        <end position="433"/>
    </location>
</feature>
<feature type="region of interest" description="Disordered" evidence="2">
    <location>
        <begin position="19"/>
        <end position="47"/>
    </location>
</feature>
<feature type="region of interest" description="Disordered" evidence="2">
    <location>
        <begin position="93"/>
        <end position="116"/>
    </location>
</feature>
<feature type="region of interest" description="Interaction with CDK2">
    <location>
        <begin position="169"/>
        <end position="177"/>
    </location>
</feature>
<feature type="region of interest" description="Interaction with CDK2">
    <location>
        <begin position="258"/>
        <end position="261"/>
    </location>
</feature>
<feature type="modified residue" description="N6-acetyllysine" evidence="18">
    <location>
        <position position="73"/>
    </location>
</feature>
<feature type="modified residue" description="Phosphoserine; by CDK1" evidence="4 5">
    <location>
        <position position="126"/>
    </location>
</feature>
<feature type="modified residue" description="Phosphoserine" evidence="4">
    <location>
        <position position="128"/>
    </location>
</feature>
<feature type="modified residue" description="Phosphoserine; by PLK1" evidence="4 5">
    <location>
        <position position="133"/>
    </location>
</feature>
<feature type="modified residue" description="Phosphoserine" evidence="4 5">
    <location>
        <position position="147"/>
    </location>
</feature>
<feature type="modified residue" description="Phosphothreonine" evidence="17">
    <location>
        <position position="321"/>
    </location>
</feature>
<feature type="splice variant" id="VSP_053892" description="In isoform 2." evidence="15">
    <location>
        <begin position="362"/>
        <end position="398"/>
    </location>
</feature>
<feature type="mutagenesis site" description="Strongly impairs phosphorylation by PLK1." evidence="4 5">
    <original>S</original>
    <variation>A</variation>
    <location>
        <position position="133"/>
    </location>
</feature>
<feature type="mutagenesis site" description="Does not affect phosphorylation by PLK1." evidence="5">
    <original>S</original>
    <variation>A</variation>
    <location>
        <position position="147"/>
    </location>
</feature>
<feature type="sequence conflict" description="In Ref. 3; BAF82120." evidence="16" ref="3">
    <original>E</original>
    <variation>G</variation>
    <location>
        <position position="108"/>
    </location>
</feature>
<feature type="sequence conflict" description="In Ref. 3; BAF82120." evidence="16" ref="3">
    <original>V</original>
    <variation>A</variation>
    <location>
        <position position="153"/>
    </location>
</feature>
<feature type="helix" evidence="21">
    <location>
        <begin position="43"/>
        <end position="45"/>
    </location>
</feature>
<feature type="helix" evidence="20">
    <location>
        <begin position="171"/>
        <end position="184"/>
    </location>
</feature>
<feature type="turn" evidence="20">
    <location>
        <begin position="189"/>
        <end position="194"/>
    </location>
</feature>
<feature type="strand" evidence="20">
    <location>
        <begin position="195"/>
        <end position="197"/>
    </location>
</feature>
<feature type="helix" evidence="20">
    <location>
        <begin position="199"/>
        <end position="216"/>
    </location>
</feature>
<feature type="helix" evidence="20">
    <location>
        <begin position="220"/>
        <end position="236"/>
    </location>
</feature>
<feature type="helix" evidence="20">
    <location>
        <begin position="241"/>
        <end position="243"/>
    </location>
</feature>
<feature type="helix" evidence="20">
    <location>
        <begin position="244"/>
        <end position="259"/>
    </location>
</feature>
<feature type="helix" evidence="20">
    <location>
        <begin position="266"/>
        <end position="272"/>
    </location>
</feature>
<feature type="turn" evidence="20">
    <location>
        <begin position="273"/>
        <end position="275"/>
    </location>
</feature>
<feature type="helix" evidence="20">
    <location>
        <begin position="279"/>
        <end position="292"/>
    </location>
</feature>
<feature type="turn" evidence="20">
    <location>
        <begin position="293"/>
        <end position="295"/>
    </location>
</feature>
<feature type="helix" evidence="20">
    <location>
        <begin position="302"/>
        <end position="312"/>
    </location>
</feature>
<feature type="helix" evidence="20">
    <location>
        <begin position="317"/>
        <end position="329"/>
    </location>
</feature>
<feature type="helix" evidence="20">
    <location>
        <begin position="330"/>
        <end position="332"/>
    </location>
</feature>
<feature type="helix" evidence="20">
    <location>
        <begin position="334"/>
        <end position="336"/>
    </location>
</feature>
<feature type="strand" evidence="19">
    <location>
        <begin position="337"/>
        <end position="339"/>
    </location>
</feature>
<feature type="helix" evidence="20">
    <location>
        <begin position="341"/>
        <end position="356"/>
    </location>
</feature>
<feature type="helix" evidence="20">
    <location>
        <begin position="363"/>
        <end position="366"/>
    </location>
</feature>
<feature type="helix" evidence="20">
    <location>
        <begin position="373"/>
        <end position="391"/>
    </location>
</feature>
<feature type="helix" evidence="20">
    <location>
        <begin position="399"/>
        <end position="403"/>
    </location>
</feature>
<feature type="helix" evidence="20">
    <location>
        <begin position="407"/>
        <end position="409"/>
    </location>
</feature>
<feature type="helix" evidence="20">
    <location>
        <begin position="412"/>
        <end position="414"/>
    </location>
</feature>
<feature type="helix" evidence="20">
    <location>
        <begin position="416"/>
        <end position="419"/>
    </location>
</feature>
<feature type="helix" evidence="20">
    <location>
        <begin position="421"/>
        <end position="428"/>
    </location>
</feature>
<comment type="function">
    <text evidence="10 11 14">Essential for the control of the cell cycle at the G2/M (mitosis) transition.</text>
</comment>
<comment type="subunit">
    <text evidence="1 3 6 7 8 10 12 13">Interacts with the CDC2 protein kinase to form a serine/threonine kinase holoenzyme complex also known as maturation promoting factor (MPF). The cyclin subunit imparts substrate specificity to the complex. Binds HEI10. Interacts with catalytically active RALBP1 and CDC2 during mitosis to form an endocytotic complex during interphase. Interacts with CCNF; interaction is required for nuclear localization. Interacts with CDK5RAP3 (PubMed:15790566). Interacts with RFPL4A and UBE2A (By similarity). Interacts with INCA1 (PubMed:21540187).</text>
</comment>
<comment type="interaction">
    <interactant intactId="EBI-495332">
        <id>P14635</id>
    </interactant>
    <interactant intactId="EBI-745269">
        <id>Q9NPC3</id>
        <label>CCNB1IP1</label>
    </interactant>
    <organismsDiffer>false</organismsDiffer>
    <experiments>2</experiments>
</comment>
<comment type="interaction">
    <interactant intactId="EBI-495332">
        <id>P14635</id>
    </interactant>
    <interactant intactId="EBI-444308">
        <id>P06493</id>
        <label>CDK1</label>
    </interactant>
    <organismsDiffer>false</organismsDiffer>
    <experiments>28</experiments>
</comment>
<comment type="interaction">
    <interactant intactId="EBI-495332">
        <id>P14635</id>
    </interactant>
    <interactant intactId="EBI-1041567">
        <id>Q00535</id>
        <label>CDK5</label>
    </interactant>
    <organismsDiffer>false</organismsDiffer>
    <experiments>8</experiments>
</comment>
<comment type="interaction">
    <interactant intactId="EBI-495332">
        <id>P14635</id>
    </interactant>
    <interactant intactId="EBI-519280">
        <id>P46527</id>
        <label>CDKN1B</label>
    </interactant>
    <organismsDiffer>false</organismsDiffer>
    <experiments>6</experiments>
</comment>
<comment type="interaction">
    <interactant intactId="EBI-495332">
        <id>P14635</id>
    </interactant>
    <interactant intactId="EBI-15621191">
        <id>O75618-1</id>
        <label>DEDD</label>
    </interactant>
    <organismsDiffer>false</organismsDiffer>
    <experiments>3</experiments>
</comment>
<comment type="interaction">
    <interactant intactId="EBI-495332">
        <id>P14635</id>
    </interactant>
    <interactant intactId="EBI-495308">
        <id>Q99640</id>
        <label>PKMYT1</label>
    </interactant>
    <organismsDiffer>false</organismsDiffer>
    <experiments>8</experiments>
</comment>
<comment type="interaction">
    <interactant intactId="EBI-495332">
        <id>P14635</id>
    </interactant>
    <interactant intactId="EBI-8775406">
        <id>Q13635</id>
        <label>PTCH1</label>
    </interactant>
    <organismsDiffer>false</organismsDiffer>
    <experiments>2</experiments>
</comment>
<comment type="interaction">
    <interactant intactId="EBI-495332">
        <id>P14635</id>
    </interactant>
    <interactant intactId="EBI-473850">
        <id>P61086</id>
        <label>UBE2K</label>
    </interactant>
    <organismsDiffer>false</organismsDiffer>
    <experiments>2</experiments>
</comment>
<comment type="interaction">
    <interactant intactId="EBI-495332">
        <id>P14635</id>
    </interactant>
    <interactant intactId="EBI-625304">
        <id>Q96PU4</id>
        <label>UHRF2</label>
    </interactant>
    <organismsDiffer>false</organismsDiffer>
    <experiments>2</experiments>
</comment>
<comment type="subcellular location">
    <subcellularLocation>
        <location>Cytoplasm</location>
    </subcellularLocation>
    <subcellularLocation>
        <location>Nucleus</location>
    </subcellularLocation>
    <subcellularLocation>
        <location>Cytoplasm</location>
        <location>Cytoskeleton</location>
        <location>Microtubule organizing center</location>
        <location>Centrosome</location>
    </subcellularLocation>
</comment>
<comment type="alternative products">
    <event type="alternative splicing"/>
    <isoform>
        <id>P14635-1</id>
        <name>1</name>
        <sequence type="displayed"/>
    </isoform>
    <isoform>
        <id>P14635-2</id>
        <name>2</name>
        <sequence type="described" ref="VSP_053892"/>
    </isoform>
</comment>
<comment type="developmental stage">
    <text evidence="13">Accumulates steadily during G2 and is abruptly destroyed at mitosis.</text>
</comment>
<comment type="PTM">
    <text evidence="9 14">Ubiquitinated by the SCF(NIPA) complex during interphase, leading to its destruction (PubMed:16009132). Deubiquitinated by USP22 during G2/M phase (PubMed:27030811).</text>
</comment>
<comment type="PTM">
    <text evidence="4 5">Phosphorylated by PLK1 at Ser-133 on centrosomes during prophase: phosphorylation by PLK1 does not cause nuclear import. Phosphorylation at Ser-147 was also reported to be mediated by PLK1 but Ser-133 seems to be the primary phosphorylation site.</text>
</comment>
<comment type="similarity">
    <text evidence="16">Belongs to the cyclin family. Cyclin AB subfamily.</text>
</comment>
<comment type="online information" name="Atlas of Genetics and Cytogenetics in Oncology and Haematology">
    <link uri="https://atlasgeneticsoncology.org/gene/951/CCNB1"/>
</comment>
<dbReference type="EMBL" id="M25753">
    <property type="status" value="NOT_ANNOTATED_CDS"/>
    <property type="molecule type" value="mRNA"/>
</dbReference>
<dbReference type="EMBL" id="AY338491">
    <property type="protein sequence ID" value="AAP88038.1"/>
    <property type="molecule type" value="Genomic_DNA"/>
</dbReference>
<dbReference type="EMBL" id="AK289431">
    <property type="protein sequence ID" value="BAF82120.1"/>
    <property type="molecule type" value="mRNA"/>
</dbReference>
<dbReference type="EMBL" id="BT020128">
    <property type="protein sequence ID" value="AAV38930.1"/>
    <property type="molecule type" value="mRNA"/>
</dbReference>
<dbReference type="EMBL" id="AC010273">
    <property type="status" value="NOT_ANNOTATED_CDS"/>
    <property type="molecule type" value="Genomic_DNA"/>
</dbReference>
<dbReference type="EMBL" id="AC022107">
    <property type="status" value="NOT_ANNOTATED_CDS"/>
    <property type="molecule type" value="Genomic_DNA"/>
</dbReference>
<dbReference type="EMBL" id="BC006510">
    <property type="protein sequence ID" value="AAH06510.1"/>
    <property type="molecule type" value="mRNA"/>
</dbReference>
<dbReference type="CCDS" id="CCDS3997.1">
    <molecule id="P14635-1"/>
</dbReference>
<dbReference type="PIR" id="A32992">
    <property type="entry name" value="A32992"/>
</dbReference>
<dbReference type="RefSeq" id="NP_001341773.1">
    <molecule id="P14635-2"/>
    <property type="nucleotide sequence ID" value="NM_001354844.2"/>
</dbReference>
<dbReference type="RefSeq" id="NP_114172.1">
    <molecule id="P14635-1"/>
    <property type="nucleotide sequence ID" value="NM_031966.4"/>
</dbReference>
<dbReference type="PDB" id="2B9R">
    <property type="method" value="X-ray"/>
    <property type="resolution" value="2.90 A"/>
    <property type="chains" value="A/B=165-433"/>
</dbReference>
<dbReference type="PDB" id="2JGZ">
    <property type="method" value="X-ray"/>
    <property type="resolution" value="2.90 A"/>
    <property type="chains" value="B=167-426"/>
</dbReference>
<dbReference type="PDB" id="4Y72">
    <property type="method" value="X-ray"/>
    <property type="resolution" value="2.30 A"/>
    <property type="chains" value="B=165-433"/>
</dbReference>
<dbReference type="PDB" id="4YC3">
    <property type="method" value="X-ray"/>
    <property type="resolution" value="2.70 A"/>
    <property type="chains" value="B=165-433"/>
</dbReference>
<dbReference type="PDB" id="5HQ0">
    <property type="method" value="X-ray"/>
    <property type="resolution" value="2.30 A"/>
    <property type="chains" value="B=165-433"/>
</dbReference>
<dbReference type="PDB" id="5LQF">
    <property type="method" value="X-ray"/>
    <property type="resolution" value="2.06 A"/>
    <property type="chains" value="B/E=165-433"/>
</dbReference>
<dbReference type="PDB" id="6GU2">
    <property type="method" value="X-ray"/>
    <property type="resolution" value="2.00 A"/>
    <property type="chains" value="B=165-433"/>
</dbReference>
<dbReference type="PDB" id="6GU3">
    <property type="method" value="X-ray"/>
    <property type="resolution" value="2.65 A"/>
    <property type="chains" value="B=165-433"/>
</dbReference>
<dbReference type="PDB" id="6GU4">
    <property type="method" value="X-ray"/>
    <property type="resolution" value="2.73 A"/>
    <property type="chains" value="B=165-433"/>
</dbReference>
<dbReference type="PDB" id="7NJ0">
    <property type="method" value="EM"/>
    <property type="resolution" value="3.60 A"/>
    <property type="chains" value="C=1-433"/>
</dbReference>
<dbReference type="PDB" id="8TAR">
    <property type="method" value="EM"/>
    <property type="resolution" value="4.00 A"/>
    <property type="chains" value="B=39-50"/>
</dbReference>
<dbReference type="PDB" id="8TAU">
    <property type="method" value="EM"/>
    <property type="resolution" value="3.50 A"/>
    <property type="chains" value="B=39-50"/>
</dbReference>
<dbReference type="PDB" id="9FH9">
    <property type="method" value="EM"/>
    <property type="resolution" value="2.50 A"/>
    <property type="chains" value="K/L=1-21"/>
</dbReference>
<dbReference type="PDBsum" id="2B9R"/>
<dbReference type="PDBsum" id="2JGZ"/>
<dbReference type="PDBsum" id="4Y72"/>
<dbReference type="PDBsum" id="4YC3"/>
<dbReference type="PDBsum" id="5HQ0"/>
<dbReference type="PDBsum" id="5LQF"/>
<dbReference type="PDBsum" id="6GU2"/>
<dbReference type="PDBsum" id="6GU3"/>
<dbReference type="PDBsum" id="6GU4"/>
<dbReference type="PDBsum" id="7NJ0"/>
<dbReference type="PDBsum" id="8TAR"/>
<dbReference type="PDBsum" id="8TAU"/>
<dbReference type="PDBsum" id="9FH9"/>
<dbReference type="EMDB" id="EMD-12368"/>
<dbReference type="EMDB" id="EMD-41140"/>
<dbReference type="EMDB" id="EMD-41142"/>
<dbReference type="EMDB" id="EMD-50443"/>
<dbReference type="SMR" id="P14635"/>
<dbReference type="BioGRID" id="107332">
    <property type="interactions" value="266"/>
</dbReference>
<dbReference type="ComplexPortal" id="CPX-2007">
    <property type="entry name" value="Cyclin B1-CDK1 complex"/>
</dbReference>
<dbReference type="CORUM" id="P14635"/>
<dbReference type="DIP" id="DIP-59N"/>
<dbReference type="ELM" id="P14635"/>
<dbReference type="FunCoup" id="P14635">
    <property type="interactions" value="2075"/>
</dbReference>
<dbReference type="IntAct" id="P14635">
    <property type="interactions" value="103"/>
</dbReference>
<dbReference type="MINT" id="P14635"/>
<dbReference type="STRING" id="9606.ENSP00000256442"/>
<dbReference type="BindingDB" id="P14635"/>
<dbReference type="ChEMBL" id="CHEMBL2412"/>
<dbReference type="DrugBank" id="DB03777">
    <property type="generic name" value="Bisindolylmaleimide I"/>
</dbReference>
<dbReference type="DrugCentral" id="P14635"/>
<dbReference type="TCDB" id="1.I.1.1.3">
    <property type="family name" value="the nuclear pore complex (npc) family"/>
</dbReference>
<dbReference type="GlyGen" id="P14635">
    <property type="glycosylation" value="1 site, 1 O-linked glycan (1 site)"/>
</dbReference>
<dbReference type="iPTMnet" id="P14635"/>
<dbReference type="MetOSite" id="P14635"/>
<dbReference type="PhosphoSitePlus" id="P14635"/>
<dbReference type="SwissPalm" id="P14635"/>
<dbReference type="BioMuta" id="CCNB1"/>
<dbReference type="DMDM" id="116176"/>
<dbReference type="CPTAC" id="CPTAC-1236"/>
<dbReference type="CPTAC" id="CPTAC-2795"/>
<dbReference type="CPTAC" id="CPTAC-2797"/>
<dbReference type="CPTAC" id="CPTAC-2798"/>
<dbReference type="jPOST" id="P14635"/>
<dbReference type="MassIVE" id="P14635"/>
<dbReference type="PaxDb" id="9606-ENSP00000256442"/>
<dbReference type="PeptideAtlas" id="P14635"/>
<dbReference type="ProteomicsDB" id="53068">
    <molecule id="P14635-1"/>
</dbReference>
<dbReference type="ProteomicsDB" id="65222"/>
<dbReference type="Pumba" id="P14635"/>
<dbReference type="Antibodypedia" id="3537">
    <property type="antibodies" value="1894 antibodies from 47 providers"/>
</dbReference>
<dbReference type="DNASU" id="891"/>
<dbReference type="Ensembl" id="ENST00000256442.10">
    <molecule id="P14635-1"/>
    <property type="protein sequence ID" value="ENSP00000256442.5"/>
    <property type="gene ID" value="ENSG00000134057.15"/>
</dbReference>
<dbReference type="Ensembl" id="ENST00000505500.5">
    <molecule id="P14635-2"/>
    <property type="protein sequence ID" value="ENSP00000424588.1"/>
    <property type="gene ID" value="ENSG00000134057.15"/>
</dbReference>
<dbReference type="GeneID" id="891"/>
<dbReference type="KEGG" id="hsa:891"/>
<dbReference type="MANE-Select" id="ENST00000256442.10">
    <property type="protein sequence ID" value="ENSP00000256442.5"/>
    <property type="RefSeq nucleotide sequence ID" value="NM_031966.4"/>
    <property type="RefSeq protein sequence ID" value="NP_114172.1"/>
</dbReference>
<dbReference type="UCSC" id="uc003jvm.4">
    <molecule id="P14635-1"/>
    <property type="organism name" value="human"/>
</dbReference>
<dbReference type="AGR" id="HGNC:1579"/>
<dbReference type="CTD" id="891"/>
<dbReference type="DisGeNET" id="891"/>
<dbReference type="GeneCards" id="CCNB1"/>
<dbReference type="HGNC" id="HGNC:1579">
    <property type="gene designation" value="CCNB1"/>
</dbReference>
<dbReference type="HPA" id="ENSG00000134057">
    <property type="expression patterns" value="Tissue enhanced (bone marrow, lymphoid tissue)"/>
</dbReference>
<dbReference type="MIM" id="123836">
    <property type="type" value="gene"/>
</dbReference>
<dbReference type="neXtProt" id="NX_P14635"/>
<dbReference type="OpenTargets" id="ENSG00000134057"/>
<dbReference type="PharmGKB" id="PA95"/>
<dbReference type="VEuPathDB" id="HostDB:ENSG00000134057"/>
<dbReference type="eggNOG" id="KOG0653">
    <property type="taxonomic scope" value="Eukaryota"/>
</dbReference>
<dbReference type="GeneTree" id="ENSGT00940000154586"/>
<dbReference type="HOGENOM" id="CLU_020695_2_1_1"/>
<dbReference type="InParanoid" id="P14635"/>
<dbReference type="OMA" id="QDCMLHM"/>
<dbReference type="OrthoDB" id="5590282at2759"/>
<dbReference type="PAN-GO" id="P14635">
    <property type="GO annotations" value="9 GO annotations based on evolutionary models"/>
</dbReference>
<dbReference type="PhylomeDB" id="P14635"/>
<dbReference type="TreeFam" id="TF101001"/>
<dbReference type="PathwayCommons" id="P14635"/>
<dbReference type="Reactome" id="R-HSA-113507">
    <property type="pathway name" value="E2F-enabled inhibition of pre-replication complex formation"/>
</dbReference>
<dbReference type="Reactome" id="R-HSA-156711">
    <property type="pathway name" value="Polo-like kinase mediated events"/>
</dbReference>
<dbReference type="Reactome" id="R-HSA-162658">
    <property type="pathway name" value="Golgi Cisternae Pericentriolar Stack Reorganization"/>
</dbReference>
<dbReference type="Reactome" id="R-HSA-174048">
    <property type="pathway name" value="APC/C:Cdc20 mediated degradation of Cyclin B"/>
</dbReference>
<dbReference type="Reactome" id="R-HSA-176408">
    <property type="pathway name" value="Regulation of APC/C activators between G1/S and early anaphase"/>
</dbReference>
<dbReference type="Reactome" id="R-HSA-176412">
    <property type="pathway name" value="Phosphorylation of the APC/C"/>
</dbReference>
<dbReference type="Reactome" id="R-HSA-176417">
    <property type="pathway name" value="Phosphorylation of Emi1"/>
</dbReference>
<dbReference type="Reactome" id="R-HSA-2299718">
    <property type="pathway name" value="Condensation of Prophase Chromosomes"/>
</dbReference>
<dbReference type="Reactome" id="R-HSA-2465910">
    <property type="pathway name" value="MASTL Facilitates Mitotic Progression"/>
</dbReference>
<dbReference type="Reactome" id="R-HSA-2500257">
    <property type="pathway name" value="Resolution of Sister Chromatid Cohesion"/>
</dbReference>
<dbReference type="Reactome" id="R-HSA-2514853">
    <property type="pathway name" value="Condensation of Prometaphase Chromosomes"/>
</dbReference>
<dbReference type="Reactome" id="R-HSA-2565942">
    <property type="pathway name" value="Regulation of PLK1 Activity at G2/M Transition"/>
</dbReference>
<dbReference type="Reactome" id="R-HSA-2980767">
    <property type="pathway name" value="Activation of NIMA Kinases NEK9, NEK6, NEK7"/>
</dbReference>
<dbReference type="Reactome" id="R-HSA-2995383">
    <property type="pathway name" value="Initiation of Nuclear Envelope (NE) Reformation"/>
</dbReference>
<dbReference type="Reactome" id="R-HSA-3301854">
    <property type="pathway name" value="Nuclear Pore Complex (NPC) Disassembly"/>
</dbReference>
<dbReference type="Reactome" id="R-HSA-4419969">
    <property type="pathway name" value="Depolymerization of the Nuclear Lamina"/>
</dbReference>
<dbReference type="Reactome" id="R-HSA-6804114">
    <property type="pathway name" value="TP53 Regulates Transcription of Genes Involved in G2 Cell Cycle Arrest"/>
</dbReference>
<dbReference type="Reactome" id="R-HSA-68875">
    <property type="pathway name" value="Mitotic Prophase"/>
</dbReference>
<dbReference type="Reactome" id="R-HSA-69273">
    <property type="pathway name" value="Cyclin A/B1/B2 associated events during G2/M transition"/>
</dbReference>
<dbReference type="Reactome" id="R-HSA-69478">
    <property type="pathway name" value="G2/M DNA replication checkpoint"/>
</dbReference>
<dbReference type="Reactome" id="R-HSA-75035">
    <property type="pathway name" value="Chk1/Chk2(Cds1) mediated inactivation of Cyclin B:Cdk1 complex"/>
</dbReference>
<dbReference type="Reactome" id="R-HSA-8852276">
    <property type="pathway name" value="The role of GTSE1 in G2/M progression after G2 checkpoint"/>
</dbReference>
<dbReference type="Reactome" id="R-HSA-8878166">
    <property type="pathway name" value="Transcriptional regulation by RUNX2"/>
</dbReference>
<dbReference type="Reactome" id="R-HSA-9725371">
    <property type="pathway name" value="Nuclear events stimulated by ALK signaling in cancer"/>
</dbReference>
<dbReference type="Reactome" id="R-HSA-9825892">
    <property type="pathway name" value="Regulation of MITF-M-dependent genes involved in cell cycle and proliferation"/>
</dbReference>
<dbReference type="SignaLink" id="P14635"/>
<dbReference type="SIGNOR" id="P14635"/>
<dbReference type="BioGRID-ORCS" id="891">
    <property type="hits" value="540 hits in 1183 CRISPR screens"/>
</dbReference>
<dbReference type="CD-CODE" id="8C2F96ED">
    <property type="entry name" value="Centrosome"/>
</dbReference>
<dbReference type="CD-CODE" id="91857CE7">
    <property type="entry name" value="Nucleolus"/>
</dbReference>
<dbReference type="ChiTaRS" id="CCNB1">
    <property type="organism name" value="human"/>
</dbReference>
<dbReference type="EvolutionaryTrace" id="P14635"/>
<dbReference type="GeneWiki" id="Cyclin_B1"/>
<dbReference type="GenomeRNAi" id="891"/>
<dbReference type="Pharos" id="P14635">
    <property type="development level" value="Tchem"/>
</dbReference>
<dbReference type="PRO" id="PR:P14635"/>
<dbReference type="Proteomes" id="UP000005640">
    <property type="component" value="Chromosome 5"/>
</dbReference>
<dbReference type="RNAct" id="P14635">
    <property type="molecule type" value="protein"/>
</dbReference>
<dbReference type="Bgee" id="ENSG00000134057">
    <property type="expression patterns" value="Expressed in secondary oocyte and 142 other cell types or tissues"/>
</dbReference>
<dbReference type="ExpressionAtlas" id="P14635">
    <property type="expression patterns" value="baseline and differential"/>
</dbReference>
<dbReference type="GO" id="GO:0005813">
    <property type="term" value="C:centrosome"/>
    <property type="evidence" value="ECO:0000314"/>
    <property type="project" value="UniProtKB"/>
</dbReference>
<dbReference type="GO" id="GO:0097125">
    <property type="term" value="C:cyclin B1-CDK1 complex"/>
    <property type="evidence" value="ECO:0000314"/>
    <property type="project" value="CAFA"/>
</dbReference>
<dbReference type="GO" id="GO:0005737">
    <property type="term" value="C:cytoplasm"/>
    <property type="evidence" value="ECO:0000314"/>
    <property type="project" value="UniProtKB"/>
</dbReference>
<dbReference type="GO" id="GO:0005829">
    <property type="term" value="C:cytosol"/>
    <property type="evidence" value="ECO:0000314"/>
    <property type="project" value="HPA"/>
</dbReference>
<dbReference type="GO" id="GO:0016020">
    <property type="term" value="C:membrane"/>
    <property type="evidence" value="ECO:0007669"/>
    <property type="project" value="Ensembl"/>
</dbReference>
<dbReference type="GO" id="GO:0005815">
    <property type="term" value="C:microtubule organizing center"/>
    <property type="evidence" value="ECO:0000318"/>
    <property type="project" value="GO_Central"/>
</dbReference>
<dbReference type="GO" id="GO:0005759">
    <property type="term" value="C:mitochondrial matrix"/>
    <property type="evidence" value="ECO:0007669"/>
    <property type="project" value="Ensembl"/>
</dbReference>
<dbReference type="GO" id="GO:0005654">
    <property type="term" value="C:nucleoplasm"/>
    <property type="evidence" value="ECO:0000304"/>
    <property type="project" value="Reactome"/>
</dbReference>
<dbReference type="GO" id="GO:0005634">
    <property type="term" value="C:nucleus"/>
    <property type="evidence" value="ECO:0000314"/>
    <property type="project" value="UniProtKB"/>
</dbReference>
<dbReference type="GO" id="GO:0000940">
    <property type="term" value="C:outer kinetochore"/>
    <property type="evidence" value="ECO:0000314"/>
    <property type="project" value="BHF-UCL"/>
</dbReference>
<dbReference type="GO" id="GO:0000922">
    <property type="term" value="C:spindle pole"/>
    <property type="evidence" value="ECO:0000314"/>
    <property type="project" value="BHF-UCL"/>
</dbReference>
<dbReference type="GO" id="GO:0061575">
    <property type="term" value="F:cyclin-dependent protein serine/threonine kinase activator activity"/>
    <property type="evidence" value="ECO:0000314"/>
    <property type="project" value="CAFA"/>
</dbReference>
<dbReference type="GO" id="GO:0016538">
    <property type="term" value="F:cyclin-dependent protein serine/threonine kinase regulator activity"/>
    <property type="evidence" value="ECO:0000318"/>
    <property type="project" value="GO_Central"/>
</dbReference>
<dbReference type="GO" id="GO:0005113">
    <property type="term" value="F:patched binding"/>
    <property type="evidence" value="ECO:0000353"/>
    <property type="project" value="BHF-UCL"/>
</dbReference>
<dbReference type="GO" id="GO:0019901">
    <property type="term" value="F:protein kinase binding"/>
    <property type="evidence" value="ECO:0000353"/>
    <property type="project" value="UniProtKB"/>
</dbReference>
<dbReference type="GO" id="GO:0044389">
    <property type="term" value="F:ubiquitin-like protein ligase binding"/>
    <property type="evidence" value="ECO:0000353"/>
    <property type="project" value="UniProtKB"/>
</dbReference>
<dbReference type="GO" id="GO:0051301">
    <property type="term" value="P:cell division"/>
    <property type="evidence" value="ECO:0007669"/>
    <property type="project" value="UniProtKB-KW"/>
</dbReference>
<dbReference type="GO" id="GO:0071398">
    <property type="term" value="P:cellular response to fatty acid"/>
    <property type="evidence" value="ECO:0007669"/>
    <property type="project" value="Ensembl"/>
</dbReference>
<dbReference type="GO" id="GO:0071456">
    <property type="term" value="P:cellular response to hypoxia"/>
    <property type="evidence" value="ECO:0007669"/>
    <property type="project" value="Ensembl"/>
</dbReference>
<dbReference type="GO" id="GO:0071283">
    <property type="term" value="P:cellular response to iron(III) ion"/>
    <property type="evidence" value="ECO:0007669"/>
    <property type="project" value="Ensembl"/>
</dbReference>
<dbReference type="GO" id="GO:0048565">
    <property type="term" value="P:digestive tract development"/>
    <property type="evidence" value="ECO:0007669"/>
    <property type="project" value="Ensembl"/>
</dbReference>
<dbReference type="GO" id="GO:0000082">
    <property type="term" value="P:G1/S transition of mitotic cell cycle"/>
    <property type="evidence" value="ECO:0000318"/>
    <property type="project" value="GO_Central"/>
</dbReference>
<dbReference type="GO" id="GO:0000086">
    <property type="term" value="P:G2/M transition of mitotic cell cycle"/>
    <property type="evidence" value="ECO:0000303"/>
    <property type="project" value="UniProt"/>
</dbReference>
<dbReference type="GO" id="GO:0001701">
    <property type="term" value="P:in utero embryonic development"/>
    <property type="evidence" value="ECO:0007669"/>
    <property type="project" value="Ensembl"/>
</dbReference>
<dbReference type="GO" id="GO:0007080">
    <property type="term" value="P:mitotic metaphase chromosome alignment"/>
    <property type="evidence" value="ECO:0000315"/>
    <property type="project" value="BHF-UCL"/>
</dbReference>
<dbReference type="GO" id="GO:0007052">
    <property type="term" value="P:mitotic spindle organization"/>
    <property type="evidence" value="ECO:0000315"/>
    <property type="project" value="BHF-UCL"/>
</dbReference>
<dbReference type="GO" id="GO:0010629">
    <property type="term" value="P:negative regulation of gene expression"/>
    <property type="evidence" value="ECO:0007669"/>
    <property type="project" value="Ensembl"/>
</dbReference>
<dbReference type="GO" id="GO:0001556">
    <property type="term" value="P:oocyte maturation"/>
    <property type="evidence" value="ECO:0007669"/>
    <property type="project" value="Ensembl"/>
</dbReference>
<dbReference type="GO" id="GO:0051987">
    <property type="term" value="P:positive regulation of attachment of spindle microtubules to kinetochore"/>
    <property type="evidence" value="ECO:0000315"/>
    <property type="project" value="BHF-UCL"/>
</dbReference>
<dbReference type="GO" id="GO:0060045">
    <property type="term" value="P:positive regulation of cardiac muscle cell proliferation"/>
    <property type="evidence" value="ECO:0007669"/>
    <property type="project" value="Ensembl"/>
</dbReference>
<dbReference type="GO" id="GO:0048146">
    <property type="term" value="P:positive regulation of fibroblast proliferation"/>
    <property type="evidence" value="ECO:0007669"/>
    <property type="project" value="Ensembl"/>
</dbReference>
<dbReference type="GO" id="GO:0010971">
    <property type="term" value="P:positive regulation of G2/M transition of mitotic cell cycle"/>
    <property type="evidence" value="ECO:0000314"/>
    <property type="project" value="CAFA"/>
</dbReference>
<dbReference type="GO" id="GO:1905448">
    <property type="term" value="P:positive regulation of mitochondrial ATP synthesis coupled electron transport"/>
    <property type="evidence" value="ECO:0000314"/>
    <property type="project" value="CAFA"/>
</dbReference>
<dbReference type="GO" id="GO:0045931">
    <property type="term" value="P:positive regulation of mitotic cell cycle"/>
    <property type="evidence" value="ECO:0000315"/>
    <property type="project" value="BHF-UCL"/>
</dbReference>
<dbReference type="GO" id="GO:0031442">
    <property type="term" value="P:positive regulation of mRNA 3'-end processing"/>
    <property type="evidence" value="ECO:0007669"/>
    <property type="project" value="Ensembl"/>
</dbReference>
<dbReference type="GO" id="GO:0065003">
    <property type="term" value="P:protein-containing complex assembly"/>
    <property type="evidence" value="ECO:0007669"/>
    <property type="project" value="Ensembl"/>
</dbReference>
<dbReference type="GO" id="GO:0060623">
    <property type="term" value="P:regulation of chromosome condensation"/>
    <property type="evidence" value="ECO:0007669"/>
    <property type="project" value="Ensembl"/>
</dbReference>
<dbReference type="GO" id="GO:0090266">
    <property type="term" value="P:regulation of mitotic cell cycle spindle assembly checkpoint"/>
    <property type="evidence" value="ECO:0000315"/>
    <property type="project" value="BHF-UCL"/>
</dbReference>
<dbReference type="GO" id="GO:0046680">
    <property type="term" value="P:response to DDT"/>
    <property type="evidence" value="ECO:0007669"/>
    <property type="project" value="Ensembl"/>
</dbReference>
<dbReference type="GO" id="GO:0009612">
    <property type="term" value="P:response to mechanical stimulus"/>
    <property type="evidence" value="ECO:0007669"/>
    <property type="project" value="Ensembl"/>
</dbReference>
<dbReference type="GO" id="GO:0009410">
    <property type="term" value="P:response to xenobiotic stimulus"/>
    <property type="evidence" value="ECO:0007669"/>
    <property type="project" value="Ensembl"/>
</dbReference>
<dbReference type="GO" id="GO:0007283">
    <property type="term" value="P:spermatogenesis"/>
    <property type="evidence" value="ECO:0007669"/>
    <property type="project" value="Ensembl"/>
</dbReference>
<dbReference type="GO" id="GO:0042246">
    <property type="term" value="P:tissue regeneration"/>
    <property type="evidence" value="ECO:0007669"/>
    <property type="project" value="Ensembl"/>
</dbReference>
<dbReference type="GO" id="GO:0055015">
    <property type="term" value="P:ventricular cardiac muscle cell development"/>
    <property type="evidence" value="ECO:0007669"/>
    <property type="project" value="Ensembl"/>
</dbReference>
<dbReference type="CDD" id="cd20565">
    <property type="entry name" value="CYCLIN_CCNB1_rpt1"/>
    <property type="match status" value="1"/>
</dbReference>
<dbReference type="CDD" id="cd20569">
    <property type="entry name" value="CYCLIN_CCNB1_rpt2"/>
    <property type="match status" value="1"/>
</dbReference>
<dbReference type="DisProt" id="DP00223"/>
<dbReference type="FunFam" id="1.10.472.10:FF:000198">
    <property type="entry name" value="G2/mitotic-specific cyclin-B1"/>
    <property type="match status" value="1"/>
</dbReference>
<dbReference type="Gene3D" id="1.10.472.10">
    <property type="entry name" value="Cyclin-like"/>
    <property type="match status" value="2"/>
</dbReference>
<dbReference type="IDEAL" id="IID00141"/>
<dbReference type="InterPro" id="IPR048026">
    <property type="entry name" value="CCNB1_first_cyclin-box"/>
</dbReference>
<dbReference type="InterPro" id="IPR039361">
    <property type="entry name" value="Cyclin"/>
</dbReference>
<dbReference type="InterPro" id="IPR013763">
    <property type="entry name" value="Cyclin-like_dom"/>
</dbReference>
<dbReference type="InterPro" id="IPR036915">
    <property type="entry name" value="Cyclin-like_sf"/>
</dbReference>
<dbReference type="InterPro" id="IPR046965">
    <property type="entry name" value="Cyclin_A/B-like"/>
</dbReference>
<dbReference type="InterPro" id="IPR004367">
    <property type="entry name" value="Cyclin_C-dom"/>
</dbReference>
<dbReference type="InterPro" id="IPR006671">
    <property type="entry name" value="Cyclin_N"/>
</dbReference>
<dbReference type="InterPro" id="IPR048258">
    <property type="entry name" value="Cyclins_cyclin-box"/>
</dbReference>
<dbReference type="PANTHER" id="PTHR10177">
    <property type="entry name" value="CYCLINS"/>
    <property type="match status" value="1"/>
</dbReference>
<dbReference type="Pfam" id="PF02984">
    <property type="entry name" value="Cyclin_C"/>
    <property type="match status" value="1"/>
</dbReference>
<dbReference type="Pfam" id="PF00134">
    <property type="entry name" value="Cyclin_N"/>
    <property type="match status" value="1"/>
</dbReference>
<dbReference type="PIRSF" id="PIRSF001771">
    <property type="entry name" value="Cyclin_A_B_D_E"/>
    <property type="match status" value="1"/>
</dbReference>
<dbReference type="SMART" id="SM00385">
    <property type="entry name" value="CYCLIN"/>
    <property type="match status" value="2"/>
</dbReference>
<dbReference type="SMART" id="SM01332">
    <property type="entry name" value="Cyclin_C"/>
    <property type="match status" value="1"/>
</dbReference>
<dbReference type="SUPFAM" id="SSF47954">
    <property type="entry name" value="Cyclin-like"/>
    <property type="match status" value="2"/>
</dbReference>
<dbReference type="PROSITE" id="PS00292">
    <property type="entry name" value="CYCLINS"/>
    <property type="match status" value="1"/>
</dbReference>
<proteinExistence type="evidence at protein level"/>
<name>CCNB1_HUMAN</name>
<protein>
    <recommendedName>
        <fullName>G2/mitotic-specific cyclin-B1</fullName>
    </recommendedName>
</protein>
<organism>
    <name type="scientific">Homo sapiens</name>
    <name type="common">Human</name>
    <dbReference type="NCBI Taxonomy" id="9606"/>
    <lineage>
        <taxon>Eukaryota</taxon>
        <taxon>Metazoa</taxon>
        <taxon>Chordata</taxon>
        <taxon>Craniata</taxon>
        <taxon>Vertebrata</taxon>
        <taxon>Euteleostomi</taxon>
        <taxon>Mammalia</taxon>
        <taxon>Eutheria</taxon>
        <taxon>Euarchontoglires</taxon>
        <taxon>Primates</taxon>
        <taxon>Haplorrhini</taxon>
        <taxon>Catarrhini</taxon>
        <taxon>Hominidae</taxon>
        <taxon>Homo</taxon>
    </lineage>
</organism>
<evidence type="ECO:0000250" key="1">
    <source>
        <dbReference type="UniProtKB" id="P24860"/>
    </source>
</evidence>
<evidence type="ECO:0000256" key="2">
    <source>
        <dbReference type="SAM" id="MobiDB-lite"/>
    </source>
</evidence>
<evidence type="ECO:0000269" key="3">
    <source>
    </source>
</evidence>
<evidence type="ECO:0000269" key="4">
    <source>
    </source>
</evidence>
<evidence type="ECO:0000269" key="5">
    <source>
    </source>
</evidence>
<evidence type="ECO:0000269" key="6">
    <source>
    </source>
</evidence>
<evidence type="ECO:0000269" key="7">
    <source>
    </source>
</evidence>
<evidence type="ECO:0000269" key="8">
    <source>
    </source>
</evidence>
<evidence type="ECO:0000269" key="9">
    <source>
    </source>
</evidence>
<evidence type="ECO:0000269" key="10">
    <source>
    </source>
</evidence>
<evidence type="ECO:0000269" key="11">
    <source>
    </source>
</evidence>
<evidence type="ECO:0000269" key="12">
    <source>
    </source>
</evidence>
<evidence type="ECO:0000269" key="13">
    <source>
    </source>
</evidence>
<evidence type="ECO:0000269" key="14">
    <source>
    </source>
</evidence>
<evidence type="ECO:0000303" key="15">
    <source ref="4"/>
</evidence>
<evidence type="ECO:0000305" key="16"/>
<evidence type="ECO:0007744" key="17">
    <source>
    </source>
</evidence>
<evidence type="ECO:0007744" key="18">
    <source>
    </source>
</evidence>
<evidence type="ECO:0007829" key="19">
    <source>
        <dbReference type="PDB" id="2B9R"/>
    </source>
</evidence>
<evidence type="ECO:0007829" key="20">
    <source>
        <dbReference type="PDB" id="6GU2"/>
    </source>
</evidence>
<evidence type="ECO:0007829" key="21">
    <source>
        <dbReference type="PDB" id="8TAU"/>
    </source>
</evidence>
<accession>P14635</accession>
<accession>A8K066</accession>
<accession>Q5TZP9</accession>
<keyword id="KW-0002">3D-structure</keyword>
<keyword id="KW-0007">Acetylation</keyword>
<keyword id="KW-0025">Alternative splicing</keyword>
<keyword id="KW-0131">Cell cycle</keyword>
<keyword id="KW-0132">Cell division</keyword>
<keyword id="KW-0195">Cyclin</keyword>
<keyword id="KW-0963">Cytoplasm</keyword>
<keyword id="KW-0206">Cytoskeleton</keyword>
<keyword id="KW-0498">Mitosis</keyword>
<keyword id="KW-0539">Nucleus</keyword>
<keyword id="KW-0597">Phosphoprotein</keyword>
<keyword id="KW-1267">Proteomics identification</keyword>
<keyword id="KW-1185">Reference proteome</keyword>
<keyword id="KW-0832">Ubl conjugation</keyword>
<sequence length="433" mass="48337">MALRVTRNSKINAENKAKINMAGAKRVPTAPAATSKPGLRPRTALGDIGNKVSEQLQAKMPMKKEAKPSATGKVIDKKLPKPLEKVPMLVPVPVSEPVPEPEPEPEPEPVKEEKLSPEPILVDTASPSPMETSGCAPAEEDLCQAFSDVILAVNDVDAEDGADPNLCSEYVKDIYAYLRQLEEEQAVRPKYLLGREVTGNMRAILIDWLVQVQMKFRLLQETMYMTVSIIDRFMQNNCVPKKMLQLVGVTAMFIASKYEEMYPPEIGDFAFVTDNTYTKHQIRQMEMKILRALNFGLGRPLPLHFLRRASKIGEVDVEQHTLAKYLMELTMLDYDMVHFPPSQIAAGAFCLALKILDNGEWTPTLQHYLSYTEESLLPVMQHLAKNVVMVNQGLTKHMTVKNKYATSKHAKISTLPQLNSALVQDLAKAVAKV</sequence>
<gene>
    <name type="primary">CCNB1</name>
    <name type="synonym">CCNB</name>
</gene>
<reference key="1">
    <citation type="journal article" date="1989" name="Cell">
        <title>Isolation of a human cyclin cDNA: evidence for cyclin mRNA and protein regulation in the cell cycle and for interaction with p34cdc2.</title>
        <authorList>
            <person name="Pines J."/>
            <person name="Hunter T."/>
        </authorList>
    </citation>
    <scope>NUCLEOTIDE SEQUENCE [MRNA] (ISOFORM 1)</scope>
    <scope>DEVELOPMENTAL STAGE</scope>
    <scope>SUBUNIT</scope>
</reference>
<reference key="2">
    <citation type="submission" date="2003-07" db="EMBL/GenBank/DDBJ databases">
        <authorList>
            <consortium name="NIEHS SNPs program"/>
        </authorList>
    </citation>
    <scope>NUCLEOTIDE SEQUENCE [GENOMIC DNA]</scope>
</reference>
<reference key="3">
    <citation type="journal article" date="2004" name="Nat. Genet.">
        <title>Complete sequencing and characterization of 21,243 full-length human cDNAs.</title>
        <authorList>
            <person name="Ota T."/>
            <person name="Suzuki Y."/>
            <person name="Nishikawa T."/>
            <person name="Otsuki T."/>
            <person name="Sugiyama T."/>
            <person name="Irie R."/>
            <person name="Wakamatsu A."/>
            <person name="Hayashi K."/>
            <person name="Sato H."/>
            <person name="Nagai K."/>
            <person name="Kimura K."/>
            <person name="Makita H."/>
            <person name="Sekine M."/>
            <person name="Obayashi M."/>
            <person name="Nishi T."/>
            <person name="Shibahara T."/>
            <person name="Tanaka T."/>
            <person name="Ishii S."/>
            <person name="Yamamoto J."/>
            <person name="Saito K."/>
            <person name="Kawai Y."/>
            <person name="Isono Y."/>
            <person name="Nakamura Y."/>
            <person name="Nagahari K."/>
            <person name="Murakami K."/>
            <person name="Yasuda T."/>
            <person name="Iwayanagi T."/>
            <person name="Wagatsuma M."/>
            <person name="Shiratori A."/>
            <person name="Sudo H."/>
            <person name="Hosoiri T."/>
            <person name="Kaku Y."/>
            <person name="Kodaira H."/>
            <person name="Kondo H."/>
            <person name="Sugawara M."/>
            <person name="Takahashi M."/>
            <person name="Kanda K."/>
            <person name="Yokoi T."/>
            <person name="Furuya T."/>
            <person name="Kikkawa E."/>
            <person name="Omura Y."/>
            <person name="Abe K."/>
            <person name="Kamihara K."/>
            <person name="Katsuta N."/>
            <person name="Sato K."/>
            <person name="Tanikawa M."/>
            <person name="Yamazaki M."/>
            <person name="Ninomiya K."/>
            <person name="Ishibashi T."/>
            <person name="Yamashita H."/>
            <person name="Murakawa K."/>
            <person name="Fujimori K."/>
            <person name="Tanai H."/>
            <person name="Kimata M."/>
            <person name="Watanabe M."/>
            <person name="Hiraoka S."/>
            <person name="Chiba Y."/>
            <person name="Ishida S."/>
            <person name="Ono Y."/>
            <person name="Takiguchi S."/>
            <person name="Watanabe S."/>
            <person name="Yosida M."/>
            <person name="Hotuta T."/>
            <person name="Kusano J."/>
            <person name="Kanehori K."/>
            <person name="Takahashi-Fujii A."/>
            <person name="Hara H."/>
            <person name="Tanase T.-O."/>
            <person name="Nomura Y."/>
            <person name="Togiya S."/>
            <person name="Komai F."/>
            <person name="Hara R."/>
            <person name="Takeuchi K."/>
            <person name="Arita M."/>
            <person name="Imose N."/>
            <person name="Musashino K."/>
            <person name="Yuuki H."/>
            <person name="Oshima A."/>
            <person name="Sasaki N."/>
            <person name="Aotsuka S."/>
            <person name="Yoshikawa Y."/>
            <person name="Matsunawa H."/>
            <person name="Ichihara T."/>
            <person name="Shiohata N."/>
            <person name="Sano S."/>
            <person name="Moriya S."/>
            <person name="Momiyama H."/>
            <person name="Satoh N."/>
            <person name="Takami S."/>
            <person name="Terashima Y."/>
            <person name="Suzuki O."/>
            <person name="Nakagawa S."/>
            <person name="Senoh A."/>
            <person name="Mizoguchi H."/>
            <person name="Goto Y."/>
            <person name="Shimizu F."/>
            <person name="Wakebe H."/>
            <person name="Hishigaki H."/>
            <person name="Watanabe T."/>
            <person name="Sugiyama A."/>
            <person name="Takemoto M."/>
            <person name="Kawakami B."/>
            <person name="Yamazaki M."/>
            <person name="Watanabe K."/>
            <person name="Kumagai A."/>
            <person name="Itakura S."/>
            <person name="Fukuzumi Y."/>
            <person name="Fujimori Y."/>
            <person name="Komiyama M."/>
            <person name="Tashiro H."/>
            <person name="Tanigami A."/>
            <person name="Fujiwara T."/>
            <person name="Ono T."/>
            <person name="Yamada K."/>
            <person name="Fujii Y."/>
            <person name="Ozaki K."/>
            <person name="Hirao M."/>
            <person name="Ohmori Y."/>
            <person name="Kawabata A."/>
            <person name="Hikiji T."/>
            <person name="Kobatake N."/>
            <person name="Inagaki H."/>
            <person name="Ikema Y."/>
            <person name="Okamoto S."/>
            <person name="Okitani R."/>
            <person name="Kawakami T."/>
            <person name="Noguchi S."/>
            <person name="Itoh T."/>
            <person name="Shigeta K."/>
            <person name="Senba T."/>
            <person name="Matsumura K."/>
            <person name="Nakajima Y."/>
            <person name="Mizuno T."/>
            <person name="Morinaga M."/>
            <person name="Sasaki M."/>
            <person name="Togashi T."/>
            <person name="Oyama M."/>
            <person name="Hata H."/>
            <person name="Watanabe M."/>
            <person name="Komatsu T."/>
            <person name="Mizushima-Sugano J."/>
            <person name="Satoh T."/>
            <person name="Shirai Y."/>
            <person name="Takahashi Y."/>
            <person name="Nakagawa K."/>
            <person name="Okumura K."/>
            <person name="Nagase T."/>
            <person name="Nomura N."/>
            <person name="Kikuchi H."/>
            <person name="Masuho Y."/>
            <person name="Yamashita R."/>
            <person name="Nakai K."/>
            <person name="Yada T."/>
            <person name="Nakamura Y."/>
            <person name="Ohara O."/>
            <person name="Isogai T."/>
            <person name="Sugano S."/>
        </authorList>
    </citation>
    <scope>NUCLEOTIDE SEQUENCE [LARGE SCALE MRNA] (ISOFORM 1)</scope>
</reference>
<reference key="4">
    <citation type="submission" date="2004-10" db="EMBL/GenBank/DDBJ databases">
        <title>Cloning of human full-length CDSs in BD Creator(TM) system donor vector.</title>
        <authorList>
            <person name="Kalnine N."/>
            <person name="Chen X."/>
            <person name="Rolfs A."/>
            <person name="Halleck A."/>
            <person name="Hines L."/>
            <person name="Eisenstein S."/>
            <person name="Koundinya M."/>
            <person name="Raphael J."/>
            <person name="Moreira D."/>
            <person name="Kelley T."/>
            <person name="LaBaer J."/>
            <person name="Lin Y."/>
            <person name="Phelan M."/>
            <person name="Farmer A."/>
        </authorList>
    </citation>
    <scope>NUCLEOTIDE SEQUENCE [LARGE SCALE MRNA] (ISOFORM 2)</scope>
</reference>
<reference key="5">
    <citation type="journal article" date="2004" name="Nature">
        <title>The DNA sequence and comparative analysis of human chromosome 5.</title>
        <authorList>
            <person name="Schmutz J."/>
            <person name="Martin J."/>
            <person name="Terry A."/>
            <person name="Couronne O."/>
            <person name="Grimwood J."/>
            <person name="Lowry S."/>
            <person name="Gordon L.A."/>
            <person name="Scott D."/>
            <person name="Xie G."/>
            <person name="Huang W."/>
            <person name="Hellsten U."/>
            <person name="Tran-Gyamfi M."/>
            <person name="She X."/>
            <person name="Prabhakar S."/>
            <person name="Aerts A."/>
            <person name="Altherr M."/>
            <person name="Bajorek E."/>
            <person name="Black S."/>
            <person name="Branscomb E."/>
            <person name="Caoile C."/>
            <person name="Challacombe J.F."/>
            <person name="Chan Y.M."/>
            <person name="Denys M."/>
            <person name="Detter J.C."/>
            <person name="Escobar J."/>
            <person name="Flowers D."/>
            <person name="Fotopulos D."/>
            <person name="Glavina T."/>
            <person name="Gomez M."/>
            <person name="Gonzales E."/>
            <person name="Goodstein D."/>
            <person name="Grigoriev I."/>
            <person name="Groza M."/>
            <person name="Hammon N."/>
            <person name="Hawkins T."/>
            <person name="Haydu L."/>
            <person name="Israni S."/>
            <person name="Jett J."/>
            <person name="Kadner K."/>
            <person name="Kimball H."/>
            <person name="Kobayashi A."/>
            <person name="Lopez F."/>
            <person name="Lou Y."/>
            <person name="Martinez D."/>
            <person name="Medina C."/>
            <person name="Morgan J."/>
            <person name="Nandkeshwar R."/>
            <person name="Noonan J.P."/>
            <person name="Pitluck S."/>
            <person name="Pollard M."/>
            <person name="Predki P."/>
            <person name="Priest J."/>
            <person name="Ramirez L."/>
            <person name="Retterer J."/>
            <person name="Rodriguez A."/>
            <person name="Rogers S."/>
            <person name="Salamov A."/>
            <person name="Salazar A."/>
            <person name="Thayer N."/>
            <person name="Tice H."/>
            <person name="Tsai M."/>
            <person name="Ustaszewska A."/>
            <person name="Vo N."/>
            <person name="Wheeler J."/>
            <person name="Wu K."/>
            <person name="Yang J."/>
            <person name="Dickson M."/>
            <person name="Cheng J.-F."/>
            <person name="Eichler E.E."/>
            <person name="Olsen A."/>
            <person name="Pennacchio L.A."/>
            <person name="Rokhsar D.S."/>
            <person name="Richardson P."/>
            <person name="Lucas S.M."/>
            <person name="Myers R.M."/>
            <person name="Rubin E.M."/>
        </authorList>
    </citation>
    <scope>NUCLEOTIDE SEQUENCE [LARGE SCALE GENOMIC DNA]</scope>
</reference>
<reference key="6">
    <citation type="journal article" date="2004" name="Genome Res.">
        <title>The status, quality, and expansion of the NIH full-length cDNA project: the Mammalian Gene Collection (MGC).</title>
        <authorList>
            <consortium name="The MGC Project Team"/>
        </authorList>
    </citation>
    <scope>NUCLEOTIDE SEQUENCE [LARGE SCALE MRNA] (ISOFORM 1)</scope>
    <source>
        <tissue>Placenta</tissue>
    </source>
</reference>
<reference key="7">
    <citation type="journal article" date="1995" name="Exp. Cell Res.">
        <title>Structure and growth-dependent regulation of the human cyclin B1 promoter.</title>
        <authorList>
            <person name="Piaggio G."/>
            <person name="Farina A."/>
            <person name="Perrotti D."/>
            <person name="Manni I."/>
            <person name="Fuschi P."/>
            <person name="Sacchi A."/>
            <person name="Gaetano C."/>
        </authorList>
    </citation>
    <scope>NUCLEOTIDE SEQUENCE [GENOMIC DNA] OF 1-7</scope>
</reference>
<reference key="8">
    <citation type="journal article" date="2000" name="EMBO J.">
        <title>Cyclin F regulates the nuclear localization of cyclin B1 through a cyclin-cyclin interaction.</title>
        <authorList>
            <person name="Kong M."/>
            <person name="Barnes E.A."/>
            <person name="Ollendorff V."/>
            <person name="Donoghue D.J."/>
        </authorList>
    </citation>
    <scope>SUBCELLULAR LOCATION</scope>
    <scope>INTERACTION WITH CCNF</scope>
</reference>
<reference key="9">
    <citation type="journal article" date="2002" name="Oncogene">
        <title>Cooperative phosphorylation including the activity of polo-like kinase 1 regulates the subcellular localization of cyclin B1.</title>
        <authorList>
            <person name="Yuan J."/>
            <person name="Eckerdt F."/>
            <person name="Bereiter-Hahn J."/>
            <person name="Kurunci-Csacsko E."/>
            <person name="Kaufmann M."/>
            <person name="Strebhardt K."/>
        </authorList>
    </citation>
    <scope>SUBCELLULAR LOCATION</scope>
    <scope>PHOSPHORYLATION AT SER-126; SER-128; SER-133 AND SER-147</scope>
    <scope>MUTAGENESIS OF SER-133</scope>
</reference>
<reference key="10">
    <citation type="journal article" date="2003" name="J. Biol. Chem.">
        <title>RLIP, an effector of the Ral GTPases, is a platform for Cdk1 to phosphorylate epsin during the switch off of endocytosis in mitosis.</title>
        <authorList>
            <person name="Rosse C."/>
            <person name="L'Hoste S."/>
            <person name="Offner N."/>
            <person name="Picard A."/>
            <person name="Camonis J."/>
        </authorList>
    </citation>
    <scope>INTERACTION WITH RALBP1</scope>
</reference>
<reference key="11">
    <citation type="journal article" date="2003" name="Mol. Cell. Biol.">
        <title>A novel RING finger protein, human enhancer of invasion 10, alters mitotic progression through regulation of cyclin B levels.</title>
        <authorList>
            <person name="Toby G.G."/>
            <person name="Gherraby W."/>
            <person name="Coleman T.R."/>
            <person name="Golemis E.A."/>
        </authorList>
    </citation>
    <scope>INTERACTION WITH HEI10</scope>
</reference>
<reference key="12">
    <citation type="journal article" date="2003" name="Nat. Cell Biol.">
        <title>Active cyclin B1-Cdk1 first appears on centrosomes in prophase.</title>
        <authorList>
            <person name="Jackman M."/>
            <person name="Lindon C."/>
            <person name="Nigg E.A."/>
            <person name="Pines J."/>
        </authorList>
    </citation>
    <scope>SUBCELLULAR LOCATION</scope>
    <scope>PHOSPHORYLATION AT SER-126; SER-133 AND SER-147</scope>
    <scope>MUTAGENESIS OF SER-133 AND SER-147</scope>
</reference>
<reference key="13">
    <citation type="journal article" date="2005" name="Cell">
        <title>NIPA defines an SCF-type mammalian E3 ligase that regulates mitotic entry.</title>
        <authorList>
            <person name="Bassermann F."/>
            <person name="von Klitzing C."/>
            <person name="Munch S."/>
            <person name="Bai R.-Y."/>
            <person name="Kawaguchi H."/>
            <person name="Morris S.W."/>
            <person name="Peschel C."/>
            <person name="Duyster J."/>
        </authorList>
    </citation>
    <scope>UBIQUITINATION</scope>
</reference>
<reference key="14">
    <citation type="journal article" date="2004" name="Mol. Biol. Cell">
        <title>p21-mediated nuclear retention of cyclin B1-Cdk1 in response to genotoxic stress.</title>
        <authorList>
            <person name="Baus Charrier-Savournin F."/>
            <person name="Chateau M.-T."/>
            <person name="Gire V."/>
            <person name="Sedivy J."/>
            <person name="Piette J."/>
            <person name="Dulic V."/>
        </authorList>
    </citation>
    <scope>SUBCELLULAR LOCATION</scope>
</reference>
<reference key="15">
    <citation type="journal article" date="2005" name="J. Biol. Chem.">
        <title>Cdk5 activator-binding protein C53 regulates apoptosis induced by genotoxic stress via modulating the G2/M DNA damage checkpoint.</title>
        <authorList>
            <person name="Jiang H."/>
            <person name="Luo S."/>
            <person name="Li H."/>
        </authorList>
    </citation>
    <scope>INTERACTION WITH CDK5RAP3</scope>
</reference>
<reference key="16">
    <citation type="journal article" date="2008" name="Mol. Cell">
        <title>Kinase-selective enrichment enables quantitative phosphoproteomics of the kinome across the cell cycle.</title>
        <authorList>
            <person name="Daub H."/>
            <person name="Olsen J.V."/>
            <person name="Bairlein M."/>
            <person name="Gnad F."/>
            <person name="Oppermann F.S."/>
            <person name="Korner R."/>
            <person name="Greff Z."/>
            <person name="Keri G."/>
            <person name="Stemmann O."/>
            <person name="Mann M."/>
        </authorList>
    </citation>
    <scope>PHOSPHORYLATION [LARGE SCALE ANALYSIS] AT THR-321</scope>
    <scope>IDENTIFICATION BY MASS SPECTROMETRY [LARGE SCALE ANALYSIS]</scope>
    <source>
        <tissue>Cervix carcinoma</tissue>
    </source>
</reference>
<reference key="17">
    <citation type="journal article" date="2009" name="Science">
        <title>Lysine acetylation targets protein complexes and co-regulates major cellular functions.</title>
        <authorList>
            <person name="Choudhary C."/>
            <person name="Kumar C."/>
            <person name="Gnad F."/>
            <person name="Nielsen M.L."/>
            <person name="Rehman M."/>
            <person name="Walther T.C."/>
            <person name="Olsen J.V."/>
            <person name="Mann M."/>
        </authorList>
    </citation>
    <scope>ACETYLATION [LARGE SCALE ANALYSIS] AT LYS-73</scope>
    <scope>IDENTIFICATION BY MASS SPECTROMETRY [LARGE SCALE ANALYSIS]</scope>
</reference>
<reference key="18">
    <citation type="journal article" date="2011" name="BMC Syst. Biol.">
        <title>Initial characterization of the human central proteome.</title>
        <authorList>
            <person name="Burkard T.R."/>
            <person name="Planyavsky M."/>
            <person name="Kaupe I."/>
            <person name="Breitwieser F.P."/>
            <person name="Buerckstuemmer T."/>
            <person name="Bennett K.L."/>
            <person name="Superti-Furga G."/>
            <person name="Colinge J."/>
        </authorList>
    </citation>
    <scope>IDENTIFICATION BY MASS SPECTROMETRY [LARGE SCALE ANALYSIS]</scope>
</reference>
<reference key="19">
    <citation type="journal article" date="2011" name="J. Biol. Chem.">
        <title>Inhibitor of cyclin-dependent kinase (CDK) interacting with cyclin A1 (INCA1) regulates proliferation and is repressed by oncogenic signaling.</title>
        <authorList>
            <person name="Baeumer N."/>
            <person name="Tickenbrock L."/>
            <person name="Tschanter P."/>
            <person name="Lohmeyer L."/>
            <person name="Diederichs S."/>
            <person name="Baeumer S."/>
            <person name="Skryabin B.V."/>
            <person name="Zhang F."/>
            <person name="Agrawal-Singh S."/>
            <person name="Koehler G."/>
            <person name="Berdel W.E."/>
            <person name="Serve H."/>
            <person name="Koschmieder S."/>
            <person name="Mueller-Tidow C."/>
        </authorList>
    </citation>
    <scope>INTERACTION WITH INCA1</scope>
</reference>
<reference key="20">
    <citation type="journal article" date="2015" name="Cell Discov.">
        <title>Ubiquitin-specific protease 22 is a deubiquitinase of CCNB1.</title>
        <authorList>
            <person name="Lin Z."/>
            <person name="Tan C."/>
            <person name="Qiu Q."/>
            <person name="Kong S."/>
            <person name="Yang H."/>
            <person name="Zhao F."/>
            <person name="Liu Z."/>
            <person name="Li J."/>
            <person name="Kong Q."/>
            <person name="Gao B."/>
            <person name="Barrett T."/>
            <person name="Yang G.Y."/>
            <person name="Zhang J."/>
            <person name="Fang D."/>
        </authorList>
    </citation>
    <scope>FUNCTION</scope>
    <scope>DEUBIQUITINATION</scope>
</reference>
<reference key="21">
    <citation type="journal article" date="2007" name="Cell Cycle">
        <title>Cyclin B and cyclin A confer different substrate recognition properties on CDK2.</title>
        <authorList>
            <person name="Brown N.R."/>
            <person name="Lowe E.D."/>
            <person name="Petri E."/>
            <person name="Skamnaki V."/>
            <person name="Antrobus R."/>
            <person name="Johnson L.N."/>
        </authorList>
    </citation>
    <scope>X-RAY CRYSTALLOGRAPHY (2.9 ANGSTROMS) OF 167-426 IN COMPLEX WITH PHOSPHORYLATED CDK2</scope>
    <scope>FUNCTION</scope>
</reference>
<reference key="22">
    <citation type="journal article" date="2007" name="Cell Cycle">
        <title>The crystal structure of human cyclin B.</title>
        <authorList>
            <person name="Petri E.T."/>
            <person name="Errico A."/>
            <person name="Escobedo L."/>
            <person name="Hunt T."/>
            <person name="Basavappa R."/>
        </authorList>
    </citation>
    <scope>X-RAY CRYSTALLOGRAPHY (2.9 ANGSTROMS) OF 165-433</scope>
    <scope>FUNCTION</scope>
</reference>